<proteinExistence type="inferred from homology"/>
<gene>
    <name evidence="2" type="primary">tuf1</name>
    <name type="ordered locus">NMC0116</name>
</gene>
<gene>
    <name evidence="2" type="primary">tuf2</name>
    <name type="ordered locus">NMC0128</name>
</gene>
<feature type="chain" id="PRO_0000337441" description="Elongation factor Tu">
    <location>
        <begin position="1"/>
        <end position="394"/>
    </location>
</feature>
<feature type="domain" description="tr-type G">
    <location>
        <begin position="10"/>
        <end position="204"/>
    </location>
</feature>
<feature type="region of interest" description="G1" evidence="1">
    <location>
        <begin position="19"/>
        <end position="26"/>
    </location>
</feature>
<feature type="region of interest" description="G2" evidence="1">
    <location>
        <begin position="60"/>
        <end position="64"/>
    </location>
</feature>
<feature type="region of interest" description="G3" evidence="1">
    <location>
        <begin position="81"/>
        <end position="84"/>
    </location>
</feature>
<feature type="region of interest" description="G4" evidence="1">
    <location>
        <begin position="136"/>
        <end position="139"/>
    </location>
</feature>
<feature type="region of interest" description="G5" evidence="1">
    <location>
        <begin position="174"/>
        <end position="176"/>
    </location>
</feature>
<feature type="binding site" evidence="2">
    <location>
        <begin position="19"/>
        <end position="26"/>
    </location>
    <ligand>
        <name>GTP</name>
        <dbReference type="ChEBI" id="CHEBI:37565"/>
    </ligand>
</feature>
<feature type="binding site" evidence="2">
    <location>
        <position position="26"/>
    </location>
    <ligand>
        <name>Mg(2+)</name>
        <dbReference type="ChEBI" id="CHEBI:18420"/>
    </ligand>
</feature>
<feature type="binding site" evidence="2">
    <location>
        <begin position="81"/>
        <end position="85"/>
    </location>
    <ligand>
        <name>GTP</name>
        <dbReference type="ChEBI" id="CHEBI:37565"/>
    </ligand>
</feature>
<feature type="binding site" evidence="2">
    <location>
        <begin position="136"/>
        <end position="139"/>
    </location>
    <ligand>
        <name>GTP</name>
        <dbReference type="ChEBI" id="CHEBI:37565"/>
    </ligand>
</feature>
<organism>
    <name type="scientific">Neisseria meningitidis serogroup C / serotype 2a (strain ATCC 700532 / DSM 15464 / FAM18)</name>
    <dbReference type="NCBI Taxonomy" id="272831"/>
    <lineage>
        <taxon>Bacteria</taxon>
        <taxon>Pseudomonadati</taxon>
        <taxon>Pseudomonadota</taxon>
        <taxon>Betaproteobacteria</taxon>
        <taxon>Neisseriales</taxon>
        <taxon>Neisseriaceae</taxon>
        <taxon>Neisseria</taxon>
    </lineage>
</organism>
<dbReference type="EC" id="3.6.5.3" evidence="2"/>
<dbReference type="EMBL" id="AM421808">
    <property type="protein sequence ID" value="CAM09435.1"/>
    <property type="molecule type" value="Genomic_DNA"/>
</dbReference>
<dbReference type="EMBL" id="AM421808">
    <property type="protein sequence ID" value="CAM09447.1"/>
    <property type="molecule type" value="Genomic_DNA"/>
</dbReference>
<dbReference type="SMR" id="A1KRF9"/>
<dbReference type="KEGG" id="nmc:NMC0116"/>
<dbReference type="KEGG" id="nmc:NMC0128"/>
<dbReference type="HOGENOM" id="CLU_007265_0_1_4"/>
<dbReference type="Proteomes" id="UP000002286">
    <property type="component" value="Chromosome"/>
</dbReference>
<dbReference type="GO" id="GO:0005829">
    <property type="term" value="C:cytosol"/>
    <property type="evidence" value="ECO:0007669"/>
    <property type="project" value="TreeGrafter"/>
</dbReference>
<dbReference type="GO" id="GO:0005525">
    <property type="term" value="F:GTP binding"/>
    <property type="evidence" value="ECO:0007669"/>
    <property type="project" value="UniProtKB-UniRule"/>
</dbReference>
<dbReference type="GO" id="GO:0003924">
    <property type="term" value="F:GTPase activity"/>
    <property type="evidence" value="ECO:0007669"/>
    <property type="project" value="InterPro"/>
</dbReference>
<dbReference type="GO" id="GO:0097216">
    <property type="term" value="F:guanosine tetraphosphate binding"/>
    <property type="evidence" value="ECO:0007669"/>
    <property type="project" value="UniProtKB-ARBA"/>
</dbReference>
<dbReference type="GO" id="GO:0003746">
    <property type="term" value="F:translation elongation factor activity"/>
    <property type="evidence" value="ECO:0007669"/>
    <property type="project" value="UniProtKB-UniRule"/>
</dbReference>
<dbReference type="CDD" id="cd01884">
    <property type="entry name" value="EF_Tu"/>
    <property type="match status" value="1"/>
</dbReference>
<dbReference type="CDD" id="cd03697">
    <property type="entry name" value="EFTU_II"/>
    <property type="match status" value="1"/>
</dbReference>
<dbReference type="CDD" id="cd03707">
    <property type="entry name" value="EFTU_III"/>
    <property type="match status" value="1"/>
</dbReference>
<dbReference type="FunFam" id="2.40.30.10:FF:000001">
    <property type="entry name" value="Elongation factor Tu"/>
    <property type="match status" value="1"/>
</dbReference>
<dbReference type="FunFam" id="3.40.50.300:FF:000003">
    <property type="entry name" value="Elongation factor Tu"/>
    <property type="match status" value="1"/>
</dbReference>
<dbReference type="Gene3D" id="3.40.50.300">
    <property type="entry name" value="P-loop containing nucleotide triphosphate hydrolases"/>
    <property type="match status" value="1"/>
</dbReference>
<dbReference type="Gene3D" id="2.40.30.10">
    <property type="entry name" value="Translation factors"/>
    <property type="match status" value="2"/>
</dbReference>
<dbReference type="HAMAP" id="MF_00118_B">
    <property type="entry name" value="EF_Tu_B"/>
    <property type="match status" value="1"/>
</dbReference>
<dbReference type="InterPro" id="IPR041709">
    <property type="entry name" value="EF-Tu_GTP-bd"/>
</dbReference>
<dbReference type="InterPro" id="IPR050055">
    <property type="entry name" value="EF-Tu_GTPase"/>
</dbReference>
<dbReference type="InterPro" id="IPR004161">
    <property type="entry name" value="EFTu-like_2"/>
</dbReference>
<dbReference type="InterPro" id="IPR033720">
    <property type="entry name" value="EFTU_2"/>
</dbReference>
<dbReference type="InterPro" id="IPR031157">
    <property type="entry name" value="G_TR_CS"/>
</dbReference>
<dbReference type="InterPro" id="IPR027417">
    <property type="entry name" value="P-loop_NTPase"/>
</dbReference>
<dbReference type="InterPro" id="IPR005225">
    <property type="entry name" value="Small_GTP-bd"/>
</dbReference>
<dbReference type="InterPro" id="IPR000795">
    <property type="entry name" value="T_Tr_GTP-bd_dom"/>
</dbReference>
<dbReference type="InterPro" id="IPR009000">
    <property type="entry name" value="Transl_B-barrel_sf"/>
</dbReference>
<dbReference type="InterPro" id="IPR009001">
    <property type="entry name" value="Transl_elong_EF1A/Init_IF2_C"/>
</dbReference>
<dbReference type="InterPro" id="IPR004541">
    <property type="entry name" value="Transl_elong_EFTu/EF1A_bac/org"/>
</dbReference>
<dbReference type="InterPro" id="IPR004160">
    <property type="entry name" value="Transl_elong_EFTu/EF1A_C"/>
</dbReference>
<dbReference type="NCBIfam" id="TIGR00485">
    <property type="entry name" value="EF-Tu"/>
    <property type="match status" value="1"/>
</dbReference>
<dbReference type="NCBIfam" id="NF000766">
    <property type="entry name" value="PRK00049.1"/>
    <property type="match status" value="1"/>
</dbReference>
<dbReference type="NCBIfam" id="NF009372">
    <property type="entry name" value="PRK12735.1"/>
    <property type="match status" value="1"/>
</dbReference>
<dbReference type="NCBIfam" id="NF009373">
    <property type="entry name" value="PRK12736.1"/>
    <property type="match status" value="1"/>
</dbReference>
<dbReference type="NCBIfam" id="TIGR00231">
    <property type="entry name" value="small_GTP"/>
    <property type="match status" value="1"/>
</dbReference>
<dbReference type="PANTHER" id="PTHR43721:SF22">
    <property type="entry name" value="ELONGATION FACTOR TU, MITOCHONDRIAL"/>
    <property type="match status" value="1"/>
</dbReference>
<dbReference type="PANTHER" id="PTHR43721">
    <property type="entry name" value="ELONGATION FACTOR TU-RELATED"/>
    <property type="match status" value="1"/>
</dbReference>
<dbReference type="Pfam" id="PF00009">
    <property type="entry name" value="GTP_EFTU"/>
    <property type="match status" value="1"/>
</dbReference>
<dbReference type="Pfam" id="PF03144">
    <property type="entry name" value="GTP_EFTU_D2"/>
    <property type="match status" value="1"/>
</dbReference>
<dbReference type="Pfam" id="PF03143">
    <property type="entry name" value="GTP_EFTU_D3"/>
    <property type="match status" value="1"/>
</dbReference>
<dbReference type="PRINTS" id="PR00315">
    <property type="entry name" value="ELONGATNFCT"/>
</dbReference>
<dbReference type="SUPFAM" id="SSF50465">
    <property type="entry name" value="EF-Tu/eEF-1alpha/eIF2-gamma C-terminal domain"/>
    <property type="match status" value="1"/>
</dbReference>
<dbReference type="SUPFAM" id="SSF52540">
    <property type="entry name" value="P-loop containing nucleoside triphosphate hydrolases"/>
    <property type="match status" value="1"/>
</dbReference>
<dbReference type="SUPFAM" id="SSF50447">
    <property type="entry name" value="Translation proteins"/>
    <property type="match status" value="1"/>
</dbReference>
<dbReference type="PROSITE" id="PS00301">
    <property type="entry name" value="G_TR_1"/>
    <property type="match status" value="1"/>
</dbReference>
<dbReference type="PROSITE" id="PS51722">
    <property type="entry name" value="G_TR_2"/>
    <property type="match status" value="1"/>
</dbReference>
<accession>A1KRF9</accession>
<reference key="1">
    <citation type="journal article" date="2007" name="PLoS Genet.">
        <title>Meningococcal genetic variation mechanisms viewed through comparative analysis of serogroup C strain FAM18.</title>
        <authorList>
            <person name="Bentley S.D."/>
            <person name="Vernikos G.S."/>
            <person name="Snyder L.A.S."/>
            <person name="Churcher C."/>
            <person name="Arrowsmith C."/>
            <person name="Chillingworth T."/>
            <person name="Cronin A."/>
            <person name="Davis P.H."/>
            <person name="Holroyd N.E."/>
            <person name="Jagels K."/>
            <person name="Maddison M."/>
            <person name="Moule S."/>
            <person name="Rabbinowitsch E."/>
            <person name="Sharp S."/>
            <person name="Unwin L."/>
            <person name="Whitehead S."/>
            <person name="Quail M.A."/>
            <person name="Achtman M."/>
            <person name="Barrell B.G."/>
            <person name="Saunders N.J."/>
            <person name="Parkhill J."/>
        </authorList>
    </citation>
    <scope>NUCLEOTIDE SEQUENCE [LARGE SCALE GENOMIC DNA]</scope>
    <source>
        <strain>ATCC 700532 / DSM 15464 / FAM18</strain>
    </source>
</reference>
<name>EFTU_NEIMF</name>
<keyword id="KW-0963">Cytoplasm</keyword>
<keyword id="KW-0251">Elongation factor</keyword>
<keyword id="KW-0342">GTP-binding</keyword>
<keyword id="KW-0378">Hydrolase</keyword>
<keyword id="KW-0460">Magnesium</keyword>
<keyword id="KW-0479">Metal-binding</keyword>
<keyword id="KW-0547">Nucleotide-binding</keyword>
<keyword id="KW-0648">Protein biosynthesis</keyword>
<evidence type="ECO:0000250" key="1"/>
<evidence type="ECO:0000255" key="2">
    <source>
        <dbReference type="HAMAP-Rule" id="MF_00118"/>
    </source>
</evidence>
<protein>
    <recommendedName>
        <fullName evidence="2">Elongation factor Tu</fullName>
        <shortName evidence="2">EF-Tu</shortName>
        <ecNumber evidence="2">3.6.5.3</ecNumber>
    </recommendedName>
</protein>
<sequence length="394" mass="42909">MAKEKFERSKPHVNVGTIGHVDHGKTTLTAALTTILAKKFGGAAKAYDQIDNAPEEKARGITINTSHVEYETETRHYAHVDCPGHADYVKNMITGAAQMDGAILVCSAADGPMPQTREHILLARQVGVPYIIVFMNKCDMVDDAELLELVEMEIRDLLSSYDFPGDDCPIVQGSALKALEGDAAYEEKIFELAAALDSYIPTPERAVDKPFLLPIEDVFSISGRGTVVTGRVERGIIHVGDEIEIVGLKETQKTTCTGVEMFRKLLDEGQAGDNVGVLLRGTKREDVERGQVLAKPGTITPHTKFKAEVYVLSKEEGGRHTPFFANYRPQFYFRTTDVTGAVTLEEGVEMVMPGENVTITVELIAPIAMEEGLRFAIREGGRTVGAGVVSSVIA</sequence>
<comment type="function">
    <text evidence="2">GTP hydrolase that promotes the GTP-dependent binding of aminoacyl-tRNA to the A-site of ribosomes during protein biosynthesis.</text>
</comment>
<comment type="catalytic activity">
    <reaction evidence="2">
        <text>GTP + H2O = GDP + phosphate + H(+)</text>
        <dbReference type="Rhea" id="RHEA:19669"/>
        <dbReference type="ChEBI" id="CHEBI:15377"/>
        <dbReference type="ChEBI" id="CHEBI:15378"/>
        <dbReference type="ChEBI" id="CHEBI:37565"/>
        <dbReference type="ChEBI" id="CHEBI:43474"/>
        <dbReference type="ChEBI" id="CHEBI:58189"/>
        <dbReference type="EC" id="3.6.5.3"/>
    </reaction>
    <physiologicalReaction direction="left-to-right" evidence="2">
        <dbReference type="Rhea" id="RHEA:19670"/>
    </physiologicalReaction>
</comment>
<comment type="subunit">
    <text evidence="2">Monomer.</text>
</comment>
<comment type="subcellular location">
    <subcellularLocation>
        <location evidence="2">Cytoplasm</location>
    </subcellularLocation>
</comment>
<comment type="similarity">
    <text evidence="2">Belongs to the TRAFAC class translation factor GTPase superfamily. Classic translation factor GTPase family. EF-Tu/EF-1A subfamily.</text>
</comment>